<name>MOBA_SHEPW</name>
<protein>
    <recommendedName>
        <fullName evidence="1">Molybdenum cofactor guanylyltransferase</fullName>
        <shortName evidence="1">MoCo guanylyltransferase</shortName>
        <ecNumber evidence="1">2.7.7.77</ecNumber>
    </recommendedName>
    <alternativeName>
        <fullName evidence="1">GTP:molybdopterin guanylyltransferase</fullName>
    </alternativeName>
    <alternativeName>
        <fullName evidence="1">Mo-MPT guanylyltransferase</fullName>
    </alternativeName>
    <alternativeName>
        <fullName evidence="1">Molybdopterin guanylyltransferase</fullName>
    </alternativeName>
    <alternativeName>
        <fullName evidence="1">Molybdopterin-guanine dinucleotide synthase</fullName>
        <shortName evidence="1">MGD synthase</shortName>
    </alternativeName>
</protein>
<keyword id="KW-0963">Cytoplasm</keyword>
<keyword id="KW-0342">GTP-binding</keyword>
<keyword id="KW-0460">Magnesium</keyword>
<keyword id="KW-0479">Metal-binding</keyword>
<keyword id="KW-0501">Molybdenum cofactor biosynthesis</keyword>
<keyword id="KW-0547">Nucleotide-binding</keyword>
<keyword id="KW-0808">Transferase</keyword>
<sequence>MTITIDAVILAGGMARRMGGNDKGLVELESQPMIKHAIDRINPQVKEILINANRNQKVYSEFGFEVISDQDSGYLGPLAGMITAMSHTQADYLMVVPCDCPLLPRDLVNRMLAQLTTADAELAVASDGKREQPVVMLLKPSLRASMKAFLDAGERKIDFWYAKHNYIVTDFSDQPNAFINVNTPEQKQQLSEAIANEKNNLRCK</sequence>
<evidence type="ECO:0000255" key="1">
    <source>
        <dbReference type="HAMAP-Rule" id="MF_00316"/>
    </source>
</evidence>
<feature type="chain" id="PRO_1000119560" description="Molybdenum cofactor guanylyltransferase">
    <location>
        <begin position="1"/>
        <end position="204"/>
    </location>
</feature>
<feature type="binding site" evidence="1">
    <location>
        <begin position="10"/>
        <end position="12"/>
    </location>
    <ligand>
        <name>GTP</name>
        <dbReference type="ChEBI" id="CHEBI:37565"/>
    </ligand>
</feature>
<feature type="binding site" evidence="1">
    <location>
        <position position="23"/>
    </location>
    <ligand>
        <name>GTP</name>
        <dbReference type="ChEBI" id="CHEBI:37565"/>
    </ligand>
</feature>
<feature type="binding site" evidence="1">
    <location>
        <position position="51"/>
    </location>
    <ligand>
        <name>GTP</name>
        <dbReference type="ChEBI" id="CHEBI:37565"/>
    </ligand>
</feature>
<feature type="binding site" evidence="1">
    <location>
        <position position="69"/>
    </location>
    <ligand>
        <name>GTP</name>
        <dbReference type="ChEBI" id="CHEBI:37565"/>
    </ligand>
</feature>
<feature type="binding site" evidence="1">
    <location>
        <position position="99"/>
    </location>
    <ligand>
        <name>GTP</name>
        <dbReference type="ChEBI" id="CHEBI:37565"/>
    </ligand>
</feature>
<feature type="binding site" evidence="1">
    <location>
        <position position="99"/>
    </location>
    <ligand>
        <name>Mg(2+)</name>
        <dbReference type="ChEBI" id="CHEBI:18420"/>
    </ligand>
</feature>
<organism>
    <name type="scientific">Shewanella piezotolerans (strain WP3 / JCM 13877)</name>
    <dbReference type="NCBI Taxonomy" id="225849"/>
    <lineage>
        <taxon>Bacteria</taxon>
        <taxon>Pseudomonadati</taxon>
        <taxon>Pseudomonadota</taxon>
        <taxon>Gammaproteobacteria</taxon>
        <taxon>Alteromonadales</taxon>
        <taxon>Shewanellaceae</taxon>
        <taxon>Shewanella</taxon>
    </lineage>
</organism>
<accession>B8CVC1</accession>
<gene>
    <name evidence="1" type="primary">mobA</name>
    <name type="ordered locus">swp_4982</name>
</gene>
<proteinExistence type="inferred from homology"/>
<reference key="1">
    <citation type="journal article" date="2008" name="PLoS ONE">
        <title>Environmental adaptation: genomic analysis of the piezotolerant and psychrotolerant deep-sea iron reducing bacterium Shewanella piezotolerans WP3.</title>
        <authorList>
            <person name="Wang F."/>
            <person name="Wang J."/>
            <person name="Jian H."/>
            <person name="Zhang B."/>
            <person name="Li S."/>
            <person name="Wang F."/>
            <person name="Zeng X."/>
            <person name="Gao L."/>
            <person name="Bartlett D.H."/>
            <person name="Yu J."/>
            <person name="Hu S."/>
            <person name="Xiao X."/>
        </authorList>
    </citation>
    <scope>NUCLEOTIDE SEQUENCE [LARGE SCALE GENOMIC DNA]</scope>
    <source>
        <strain>WP3 / JCM 13877</strain>
    </source>
</reference>
<comment type="function">
    <text evidence="1">Transfers a GMP moiety from GTP to Mo-molybdopterin (Mo-MPT) cofactor (Moco or molybdenum cofactor) to form Mo-molybdopterin guanine dinucleotide (Mo-MGD) cofactor.</text>
</comment>
<comment type="catalytic activity">
    <reaction evidence="1">
        <text>Mo-molybdopterin + GTP + H(+) = Mo-molybdopterin guanine dinucleotide + diphosphate</text>
        <dbReference type="Rhea" id="RHEA:34243"/>
        <dbReference type="ChEBI" id="CHEBI:15378"/>
        <dbReference type="ChEBI" id="CHEBI:33019"/>
        <dbReference type="ChEBI" id="CHEBI:37565"/>
        <dbReference type="ChEBI" id="CHEBI:71302"/>
        <dbReference type="ChEBI" id="CHEBI:71310"/>
        <dbReference type="EC" id="2.7.7.77"/>
    </reaction>
</comment>
<comment type="cofactor">
    <cofactor evidence="1">
        <name>Mg(2+)</name>
        <dbReference type="ChEBI" id="CHEBI:18420"/>
    </cofactor>
</comment>
<comment type="subunit">
    <text evidence="1">Monomer.</text>
</comment>
<comment type="subcellular location">
    <subcellularLocation>
        <location evidence="1">Cytoplasm</location>
    </subcellularLocation>
</comment>
<comment type="domain">
    <text evidence="1">The N-terminal domain determines nucleotide recognition and specific binding, while the C-terminal domain determines the specific binding to the target protein.</text>
</comment>
<comment type="similarity">
    <text evidence="1">Belongs to the MobA family.</text>
</comment>
<dbReference type="EC" id="2.7.7.77" evidence="1"/>
<dbReference type="EMBL" id="CP000472">
    <property type="protein sequence ID" value="ACJ31597.1"/>
    <property type="molecule type" value="Genomic_DNA"/>
</dbReference>
<dbReference type="RefSeq" id="WP_020914926.1">
    <property type="nucleotide sequence ID" value="NC_011566.1"/>
</dbReference>
<dbReference type="SMR" id="B8CVC1"/>
<dbReference type="STRING" id="225849.swp_4982"/>
<dbReference type="KEGG" id="swp:swp_4982"/>
<dbReference type="eggNOG" id="COG0746">
    <property type="taxonomic scope" value="Bacteria"/>
</dbReference>
<dbReference type="HOGENOM" id="CLU_055597_5_1_6"/>
<dbReference type="OrthoDB" id="9788394at2"/>
<dbReference type="Proteomes" id="UP000000753">
    <property type="component" value="Chromosome"/>
</dbReference>
<dbReference type="GO" id="GO:0005737">
    <property type="term" value="C:cytoplasm"/>
    <property type="evidence" value="ECO:0007669"/>
    <property type="project" value="UniProtKB-SubCell"/>
</dbReference>
<dbReference type="GO" id="GO:0005525">
    <property type="term" value="F:GTP binding"/>
    <property type="evidence" value="ECO:0007669"/>
    <property type="project" value="UniProtKB-UniRule"/>
</dbReference>
<dbReference type="GO" id="GO:0046872">
    <property type="term" value="F:metal ion binding"/>
    <property type="evidence" value="ECO:0007669"/>
    <property type="project" value="UniProtKB-KW"/>
</dbReference>
<dbReference type="GO" id="GO:0061603">
    <property type="term" value="F:molybdenum cofactor guanylyltransferase activity"/>
    <property type="evidence" value="ECO:0007669"/>
    <property type="project" value="UniProtKB-EC"/>
</dbReference>
<dbReference type="GO" id="GO:1902758">
    <property type="term" value="P:bis(molybdopterin guanine dinucleotide)molybdenum biosynthetic process"/>
    <property type="evidence" value="ECO:0007669"/>
    <property type="project" value="TreeGrafter"/>
</dbReference>
<dbReference type="CDD" id="cd02503">
    <property type="entry name" value="MobA"/>
    <property type="match status" value="1"/>
</dbReference>
<dbReference type="Gene3D" id="3.90.550.10">
    <property type="entry name" value="Spore Coat Polysaccharide Biosynthesis Protein SpsA, Chain A"/>
    <property type="match status" value="1"/>
</dbReference>
<dbReference type="HAMAP" id="MF_00316">
    <property type="entry name" value="MobA"/>
    <property type="match status" value="1"/>
</dbReference>
<dbReference type="InterPro" id="IPR025877">
    <property type="entry name" value="MobA-like_NTP_Trfase"/>
</dbReference>
<dbReference type="InterPro" id="IPR013482">
    <property type="entry name" value="Molybde_CF_guanTrfase"/>
</dbReference>
<dbReference type="InterPro" id="IPR029044">
    <property type="entry name" value="Nucleotide-diphossugar_trans"/>
</dbReference>
<dbReference type="NCBIfam" id="TIGR02665">
    <property type="entry name" value="molyb_mobA"/>
    <property type="match status" value="1"/>
</dbReference>
<dbReference type="PANTHER" id="PTHR19136">
    <property type="entry name" value="MOLYBDENUM COFACTOR GUANYLYLTRANSFERASE"/>
    <property type="match status" value="1"/>
</dbReference>
<dbReference type="PANTHER" id="PTHR19136:SF81">
    <property type="entry name" value="MOLYBDENUM COFACTOR GUANYLYLTRANSFERASE"/>
    <property type="match status" value="1"/>
</dbReference>
<dbReference type="Pfam" id="PF12804">
    <property type="entry name" value="NTP_transf_3"/>
    <property type="match status" value="1"/>
</dbReference>
<dbReference type="SUPFAM" id="SSF53448">
    <property type="entry name" value="Nucleotide-diphospho-sugar transferases"/>
    <property type="match status" value="1"/>
</dbReference>